<name>SYC_ANAMM</name>
<evidence type="ECO:0000255" key="1">
    <source>
        <dbReference type="HAMAP-Rule" id="MF_00041"/>
    </source>
</evidence>
<dbReference type="EC" id="6.1.1.16" evidence="1"/>
<dbReference type="EMBL" id="CP000030">
    <property type="protein sequence ID" value="AAV86516.1"/>
    <property type="molecule type" value="Genomic_DNA"/>
</dbReference>
<dbReference type="RefSeq" id="WP_011114294.1">
    <property type="nucleotide sequence ID" value="NC_004842.2"/>
</dbReference>
<dbReference type="SMR" id="Q5PB14"/>
<dbReference type="KEGG" id="ama:AM481"/>
<dbReference type="HOGENOM" id="CLU_013528_0_1_5"/>
<dbReference type="GO" id="GO:0005829">
    <property type="term" value="C:cytosol"/>
    <property type="evidence" value="ECO:0007669"/>
    <property type="project" value="TreeGrafter"/>
</dbReference>
<dbReference type="GO" id="GO:0005524">
    <property type="term" value="F:ATP binding"/>
    <property type="evidence" value="ECO:0007669"/>
    <property type="project" value="UniProtKB-UniRule"/>
</dbReference>
<dbReference type="GO" id="GO:0004817">
    <property type="term" value="F:cysteine-tRNA ligase activity"/>
    <property type="evidence" value="ECO:0007669"/>
    <property type="project" value="UniProtKB-UniRule"/>
</dbReference>
<dbReference type="GO" id="GO:0008270">
    <property type="term" value="F:zinc ion binding"/>
    <property type="evidence" value="ECO:0007669"/>
    <property type="project" value="UniProtKB-UniRule"/>
</dbReference>
<dbReference type="GO" id="GO:0006423">
    <property type="term" value="P:cysteinyl-tRNA aminoacylation"/>
    <property type="evidence" value="ECO:0007669"/>
    <property type="project" value="UniProtKB-UniRule"/>
</dbReference>
<dbReference type="CDD" id="cd00672">
    <property type="entry name" value="CysRS_core"/>
    <property type="match status" value="1"/>
</dbReference>
<dbReference type="Gene3D" id="1.20.120.1910">
    <property type="entry name" value="Cysteine-tRNA ligase, C-terminal anti-codon recognition domain"/>
    <property type="match status" value="1"/>
</dbReference>
<dbReference type="Gene3D" id="3.40.50.620">
    <property type="entry name" value="HUPs"/>
    <property type="match status" value="1"/>
</dbReference>
<dbReference type="HAMAP" id="MF_00041">
    <property type="entry name" value="Cys_tRNA_synth"/>
    <property type="match status" value="1"/>
</dbReference>
<dbReference type="InterPro" id="IPR015803">
    <property type="entry name" value="Cys-tRNA-ligase"/>
</dbReference>
<dbReference type="InterPro" id="IPR015273">
    <property type="entry name" value="Cys-tRNA-synt_Ia_DALR"/>
</dbReference>
<dbReference type="InterPro" id="IPR024909">
    <property type="entry name" value="Cys-tRNA/MSH_ligase"/>
</dbReference>
<dbReference type="InterPro" id="IPR014729">
    <property type="entry name" value="Rossmann-like_a/b/a_fold"/>
</dbReference>
<dbReference type="InterPro" id="IPR032678">
    <property type="entry name" value="tRNA-synt_1_cat_dom"/>
</dbReference>
<dbReference type="InterPro" id="IPR009080">
    <property type="entry name" value="tRNAsynth_Ia_anticodon-bd"/>
</dbReference>
<dbReference type="NCBIfam" id="TIGR00435">
    <property type="entry name" value="cysS"/>
    <property type="match status" value="1"/>
</dbReference>
<dbReference type="PANTHER" id="PTHR10890:SF3">
    <property type="entry name" value="CYSTEINE--TRNA LIGASE, CYTOPLASMIC"/>
    <property type="match status" value="1"/>
</dbReference>
<dbReference type="PANTHER" id="PTHR10890">
    <property type="entry name" value="CYSTEINYL-TRNA SYNTHETASE"/>
    <property type="match status" value="1"/>
</dbReference>
<dbReference type="Pfam" id="PF09190">
    <property type="entry name" value="DALR_2"/>
    <property type="match status" value="1"/>
</dbReference>
<dbReference type="Pfam" id="PF01406">
    <property type="entry name" value="tRNA-synt_1e"/>
    <property type="match status" value="1"/>
</dbReference>
<dbReference type="PRINTS" id="PR00983">
    <property type="entry name" value="TRNASYNTHCYS"/>
</dbReference>
<dbReference type="SMART" id="SM00840">
    <property type="entry name" value="DALR_2"/>
    <property type="match status" value="1"/>
</dbReference>
<dbReference type="SUPFAM" id="SSF47323">
    <property type="entry name" value="Anticodon-binding domain of a subclass of class I aminoacyl-tRNA synthetases"/>
    <property type="match status" value="1"/>
</dbReference>
<dbReference type="SUPFAM" id="SSF52374">
    <property type="entry name" value="Nucleotidylyl transferase"/>
    <property type="match status" value="1"/>
</dbReference>
<reference key="1">
    <citation type="journal article" date="2005" name="Proc. Natl. Acad. Sci. U.S.A.">
        <title>Complete genome sequencing of Anaplasma marginale reveals that the surface is skewed to two superfamilies of outer membrane proteins.</title>
        <authorList>
            <person name="Brayton K.A."/>
            <person name="Kappmeyer L.S."/>
            <person name="Herndon D.R."/>
            <person name="Dark M.J."/>
            <person name="Tibbals D.L."/>
            <person name="Palmer G.H."/>
            <person name="McGuire T.C."/>
            <person name="Knowles D.P. Jr."/>
        </authorList>
    </citation>
    <scope>NUCLEOTIDE SEQUENCE [LARGE SCALE GENOMIC DNA]</scope>
    <source>
        <strain>St. Maries</strain>
    </source>
</reference>
<feature type="chain" id="PRO_0000159338" description="Cysteine--tRNA ligase">
    <location>
        <begin position="1"/>
        <end position="466"/>
    </location>
</feature>
<feature type="short sequence motif" description="'HIGH' region">
    <location>
        <begin position="29"/>
        <end position="39"/>
    </location>
</feature>
<feature type="short sequence motif" description="'KMSKS' region">
    <location>
        <begin position="270"/>
        <end position="274"/>
    </location>
</feature>
<feature type="binding site" evidence="1">
    <location>
        <position position="27"/>
    </location>
    <ligand>
        <name>Zn(2+)</name>
        <dbReference type="ChEBI" id="CHEBI:29105"/>
    </ligand>
</feature>
<feature type="binding site" evidence="1">
    <location>
        <position position="211"/>
    </location>
    <ligand>
        <name>Zn(2+)</name>
        <dbReference type="ChEBI" id="CHEBI:29105"/>
    </ligand>
</feature>
<feature type="binding site" evidence="1">
    <location>
        <position position="236"/>
    </location>
    <ligand>
        <name>Zn(2+)</name>
        <dbReference type="ChEBI" id="CHEBI:29105"/>
    </ligand>
</feature>
<feature type="binding site" evidence="1">
    <location>
        <position position="240"/>
    </location>
    <ligand>
        <name>Zn(2+)</name>
        <dbReference type="ChEBI" id="CHEBI:29105"/>
    </ligand>
</feature>
<feature type="binding site" evidence="1">
    <location>
        <position position="273"/>
    </location>
    <ligand>
        <name>ATP</name>
        <dbReference type="ChEBI" id="CHEBI:30616"/>
    </ligand>
</feature>
<keyword id="KW-0030">Aminoacyl-tRNA synthetase</keyword>
<keyword id="KW-0067">ATP-binding</keyword>
<keyword id="KW-0963">Cytoplasm</keyword>
<keyword id="KW-0436">Ligase</keyword>
<keyword id="KW-0479">Metal-binding</keyword>
<keyword id="KW-0547">Nucleotide-binding</keyword>
<keyword id="KW-0648">Protein biosynthesis</keyword>
<keyword id="KW-0862">Zinc</keyword>
<organism>
    <name type="scientific">Anaplasma marginale (strain St. Maries)</name>
    <dbReference type="NCBI Taxonomy" id="234826"/>
    <lineage>
        <taxon>Bacteria</taxon>
        <taxon>Pseudomonadati</taxon>
        <taxon>Pseudomonadota</taxon>
        <taxon>Alphaproteobacteria</taxon>
        <taxon>Rickettsiales</taxon>
        <taxon>Anaplasmataceae</taxon>
        <taxon>Anaplasma</taxon>
    </lineage>
</organism>
<sequence>MRLHDTLHAAKRVFSPKNSERVGVYVCGPTVYDLAHIGNARSVVVYDVLFRLLKALYPEVIYVRNITDVDDKIINATESENKSIAELTAHYTKLFHEDIEALNCLSPTFEPRATEEIETMLHIIGRLIQAGHAYVRGGTVYFSVESYKHYGALSGRKLGDMISGSRVEVVAEKLHPGDFVLWKPATDLDMKLGACWPSPWGVGRPGWHVECSAMSYRYLGDSFDIHGGGADLMFPHHENEISQSCCAFPGSEYARYWVHNGFLTVNGGEKMSKSLGNVITVRGLLSNGVDGEVIRYVFLSTHYRKPLDWGDKAVLDAKEALNKIYRSCEGFSAQLLSTGLEDVGVHDAVMASLRDDMNTPAAIAALHELVKEINKTNNAGEKLRLARVLNKSAMLMGMFRNFPERKLLDMRGLVDEGEINRLIEKRVEAKKCGDFKLADEIRESLSNMGIGISDGKDGSTRWHRKN</sequence>
<proteinExistence type="inferred from homology"/>
<protein>
    <recommendedName>
        <fullName evidence="1">Cysteine--tRNA ligase</fullName>
        <ecNumber evidence="1">6.1.1.16</ecNumber>
    </recommendedName>
    <alternativeName>
        <fullName evidence="1">Cysteinyl-tRNA synthetase</fullName>
        <shortName evidence="1">CysRS</shortName>
    </alternativeName>
</protein>
<comment type="catalytic activity">
    <reaction evidence="1">
        <text>tRNA(Cys) + L-cysteine + ATP = L-cysteinyl-tRNA(Cys) + AMP + diphosphate</text>
        <dbReference type="Rhea" id="RHEA:17773"/>
        <dbReference type="Rhea" id="RHEA-COMP:9661"/>
        <dbReference type="Rhea" id="RHEA-COMP:9679"/>
        <dbReference type="ChEBI" id="CHEBI:30616"/>
        <dbReference type="ChEBI" id="CHEBI:33019"/>
        <dbReference type="ChEBI" id="CHEBI:35235"/>
        <dbReference type="ChEBI" id="CHEBI:78442"/>
        <dbReference type="ChEBI" id="CHEBI:78517"/>
        <dbReference type="ChEBI" id="CHEBI:456215"/>
        <dbReference type="EC" id="6.1.1.16"/>
    </reaction>
</comment>
<comment type="cofactor">
    <cofactor evidence="1">
        <name>Zn(2+)</name>
        <dbReference type="ChEBI" id="CHEBI:29105"/>
    </cofactor>
    <text evidence="1">Binds 1 zinc ion per subunit.</text>
</comment>
<comment type="subunit">
    <text evidence="1">Monomer.</text>
</comment>
<comment type="subcellular location">
    <subcellularLocation>
        <location evidence="1">Cytoplasm</location>
    </subcellularLocation>
</comment>
<comment type="similarity">
    <text evidence="1">Belongs to the class-I aminoacyl-tRNA synthetase family.</text>
</comment>
<accession>Q5PB14</accession>
<gene>
    <name evidence="1" type="primary">cysS</name>
    <name type="ordered locus">AM481</name>
</gene>